<protein>
    <recommendedName>
        <fullName evidence="1">Cell division protein ZapB</fullName>
    </recommendedName>
</protein>
<name>ZAPB_EDWI9</name>
<sequence length="80" mass="9453">MSFEVFEKLEAKVQQAIDTITLLQMEIEELKEKNNQLNQEVQQAASNREGLLRENEQLKHEQEAWQERLRALLGKMNEVN</sequence>
<comment type="function">
    <text evidence="1">Non-essential, abundant cell division factor that is required for proper Z-ring formation. It is recruited early to the divisome by direct interaction with FtsZ, stimulating Z-ring assembly and thereby promoting cell division earlier in the cell cycle. Its recruitment to the Z-ring requires functional FtsA or ZipA.</text>
</comment>
<comment type="subunit">
    <text evidence="1">Homodimer. The ends of the coiled-coil dimer bind to each other, forming polymers. Interacts with FtsZ.</text>
</comment>
<comment type="subcellular location">
    <subcellularLocation>
        <location evidence="1">Cytoplasm</location>
    </subcellularLocation>
    <text evidence="1">Localizes to the septum at mid-cell, in a FtsZ-like pattern.</text>
</comment>
<comment type="similarity">
    <text evidence="1">Belongs to the ZapB family.</text>
</comment>
<proteinExistence type="inferred from homology"/>
<organism>
    <name type="scientific">Edwardsiella ictaluri (strain 93-146)</name>
    <dbReference type="NCBI Taxonomy" id="634503"/>
    <lineage>
        <taxon>Bacteria</taxon>
        <taxon>Pseudomonadati</taxon>
        <taxon>Pseudomonadota</taxon>
        <taxon>Gammaproteobacteria</taxon>
        <taxon>Enterobacterales</taxon>
        <taxon>Hafniaceae</taxon>
        <taxon>Edwardsiella</taxon>
    </lineage>
</organism>
<accession>C5BB78</accession>
<feature type="chain" id="PRO_1000213803" description="Cell division protein ZapB">
    <location>
        <begin position="1"/>
        <end position="80"/>
    </location>
</feature>
<feature type="coiled-coil region" evidence="1">
    <location>
        <begin position="3"/>
        <end position="80"/>
    </location>
</feature>
<keyword id="KW-0131">Cell cycle</keyword>
<keyword id="KW-0132">Cell division</keyword>
<keyword id="KW-0175">Coiled coil</keyword>
<keyword id="KW-0963">Cytoplasm</keyword>
<keyword id="KW-0717">Septation</keyword>
<gene>
    <name evidence="1" type="primary">zapB</name>
    <name type="ordered locus">NT01EI_3795</name>
</gene>
<dbReference type="EMBL" id="CP001600">
    <property type="protein sequence ID" value="ACR70920.1"/>
    <property type="molecule type" value="Genomic_DNA"/>
</dbReference>
<dbReference type="RefSeq" id="WP_015872954.1">
    <property type="nucleotide sequence ID" value="NZ_CP169062.1"/>
</dbReference>
<dbReference type="SMR" id="C5BB78"/>
<dbReference type="STRING" id="67780.B6E78_10550"/>
<dbReference type="GeneID" id="69540620"/>
<dbReference type="KEGG" id="eic:NT01EI_3795"/>
<dbReference type="PATRIC" id="fig|634503.3.peg.3389"/>
<dbReference type="HOGENOM" id="CLU_171174_2_0_6"/>
<dbReference type="OrthoDB" id="6554593at2"/>
<dbReference type="Proteomes" id="UP000001485">
    <property type="component" value="Chromosome"/>
</dbReference>
<dbReference type="GO" id="GO:0005737">
    <property type="term" value="C:cytoplasm"/>
    <property type="evidence" value="ECO:0007669"/>
    <property type="project" value="UniProtKB-SubCell"/>
</dbReference>
<dbReference type="GO" id="GO:0000917">
    <property type="term" value="P:division septum assembly"/>
    <property type="evidence" value="ECO:0007669"/>
    <property type="project" value="UniProtKB-KW"/>
</dbReference>
<dbReference type="GO" id="GO:0043093">
    <property type="term" value="P:FtsZ-dependent cytokinesis"/>
    <property type="evidence" value="ECO:0007669"/>
    <property type="project" value="UniProtKB-UniRule"/>
</dbReference>
<dbReference type="Gene3D" id="1.20.5.340">
    <property type="match status" value="1"/>
</dbReference>
<dbReference type="HAMAP" id="MF_01196">
    <property type="entry name" value="ZapB"/>
    <property type="match status" value="1"/>
</dbReference>
<dbReference type="InterPro" id="IPR009252">
    <property type="entry name" value="Cell_div_ZapB"/>
</dbReference>
<dbReference type="Pfam" id="PF06005">
    <property type="entry name" value="ZapB"/>
    <property type="match status" value="1"/>
</dbReference>
<reference key="1">
    <citation type="submission" date="2009-03" db="EMBL/GenBank/DDBJ databases">
        <title>Complete genome sequence of Edwardsiella ictaluri 93-146.</title>
        <authorList>
            <person name="Williams M.L."/>
            <person name="Gillaspy A.F."/>
            <person name="Dyer D.W."/>
            <person name="Thune R.L."/>
            <person name="Waldbieser G.C."/>
            <person name="Schuster S.C."/>
            <person name="Gipson J."/>
            <person name="Zaitshik J."/>
            <person name="Landry C."/>
            <person name="Lawrence M.L."/>
        </authorList>
    </citation>
    <scope>NUCLEOTIDE SEQUENCE [LARGE SCALE GENOMIC DNA]</scope>
    <source>
        <strain>93-146</strain>
    </source>
</reference>
<evidence type="ECO:0000255" key="1">
    <source>
        <dbReference type="HAMAP-Rule" id="MF_01196"/>
    </source>
</evidence>